<comment type="miscellaneous">
    <text>This protein is shorter than other FlgJ proteins and lacks the muramidase domain. It may be degenerating and may no longer be functional.</text>
</comment>
<comment type="similarity">
    <text evidence="1">Belongs to the FlgJ family.</text>
</comment>
<keyword id="KW-1005">Bacterial flagellum biogenesis</keyword>
<keyword id="KW-1185">Reference proteome</keyword>
<evidence type="ECO:0000305" key="1"/>
<accession>Q89AH4</accession>
<feature type="chain" id="PRO_0000165713" description="Putative flagellar protein FlgJ homolog">
    <location>
        <begin position="1"/>
        <end position="150"/>
    </location>
</feature>
<sequence>MSTNFFTYLLNNTKINSEKKYNRLIQNKNNQKHSIHKSSNISQQVESLFLYIMFTNMKKSSYKNEFWTTSNSESIYQNMYDQFITQTYDKKGIGLAKIIDNQIQKYKNQKHLTNLEIFDKFSNKLISFKTNNTTDDIDTIIKTSKLFRYL</sequence>
<reference key="1">
    <citation type="journal article" date="2003" name="Proc. Natl. Acad. Sci. U.S.A.">
        <title>Reductive genome evolution in Buchnera aphidicola.</title>
        <authorList>
            <person name="van Ham R.C.H.J."/>
            <person name="Kamerbeek J."/>
            <person name="Palacios C."/>
            <person name="Rausell C."/>
            <person name="Abascal F."/>
            <person name="Bastolla U."/>
            <person name="Fernandez J.M."/>
            <person name="Jimenez L."/>
            <person name="Postigo M."/>
            <person name="Silva F.J."/>
            <person name="Tamames J."/>
            <person name="Viguera E."/>
            <person name="Latorre A."/>
            <person name="Valencia A."/>
            <person name="Moran F."/>
            <person name="Moya A."/>
        </authorList>
    </citation>
    <scope>NUCLEOTIDE SEQUENCE [LARGE SCALE GENOMIC DNA]</scope>
    <source>
        <strain>Bp</strain>
    </source>
</reference>
<organism>
    <name type="scientific">Buchnera aphidicola subsp. Baizongia pistaciae (strain Bp)</name>
    <dbReference type="NCBI Taxonomy" id="224915"/>
    <lineage>
        <taxon>Bacteria</taxon>
        <taxon>Pseudomonadati</taxon>
        <taxon>Pseudomonadota</taxon>
        <taxon>Gammaproteobacteria</taxon>
        <taxon>Enterobacterales</taxon>
        <taxon>Erwiniaceae</taxon>
        <taxon>Buchnera</taxon>
    </lineage>
</organism>
<name>FLGJ_BUCBP</name>
<gene>
    <name type="primary">flgJ</name>
    <name type="ordered locus">bbp_316</name>
</gene>
<dbReference type="EMBL" id="AE016826">
    <property type="protein sequence ID" value="AAO27038.1"/>
    <property type="molecule type" value="Genomic_DNA"/>
</dbReference>
<dbReference type="RefSeq" id="WP_011091439.1">
    <property type="nucleotide sequence ID" value="NC_004545.1"/>
</dbReference>
<dbReference type="STRING" id="224915.bbp_316"/>
<dbReference type="KEGG" id="bab:bbp_316"/>
<dbReference type="HOGENOM" id="CLU_1737076_0_0_6"/>
<dbReference type="OrthoDB" id="289937at2"/>
<dbReference type="Proteomes" id="UP000000601">
    <property type="component" value="Chromosome"/>
</dbReference>
<dbReference type="GO" id="GO:0044781">
    <property type="term" value="P:bacterial-type flagellum organization"/>
    <property type="evidence" value="ECO:0007669"/>
    <property type="project" value="UniProtKB-KW"/>
</dbReference>
<dbReference type="InterPro" id="IPR019301">
    <property type="entry name" value="Flagellar_prot_FlgJ_N"/>
</dbReference>
<dbReference type="Pfam" id="PF10135">
    <property type="entry name" value="Rod-binding"/>
    <property type="match status" value="1"/>
</dbReference>
<proteinExistence type="inferred from homology"/>
<protein>
    <recommendedName>
        <fullName>Putative flagellar protein FlgJ homolog</fullName>
    </recommendedName>
</protein>